<name>PBDGT_MYCPN</name>
<organism>
    <name type="scientific">Mycoplasma pneumoniae (strain ATCC 29342 / M129 / Subtype 1)</name>
    <name type="common">Mycoplasmoides pneumoniae</name>
    <dbReference type="NCBI Taxonomy" id="272634"/>
    <lineage>
        <taxon>Bacteria</taxon>
        <taxon>Bacillati</taxon>
        <taxon>Mycoplasmatota</taxon>
        <taxon>Mycoplasmoidales</taxon>
        <taxon>Mycoplasmoidaceae</taxon>
        <taxon>Mycoplasmoides</taxon>
    </lineage>
</organism>
<sequence>MNKLISILVPCYQSQPFLDRFFKSLLKQDWNGVKVIFFNDNKPDPTYEILKQFQQAHPQLAIEVHCGEKNVGVGGSRDQLINYVDTPYFYFVDPDDEFSDPNCFKAIVETIQGENFDIAVLNSIVYLQMLKNDFLIKHIPLKNIFQGKVKLNPDNTVNHLHYIQNNDQYIWNIVINTAFFKALDLQFVNRFIEDIAVWFPIMFKAQKVLWIDVNGVNYYLRPNSASTQKNSIKLLSFIEAYERLYFHLKKVGKLADFIDPNNKIESRFWRRQAFIWFSFINVSWMKAEFEQTKSVLQKLFDFMEANGIYDRVFTNKHHGIYLLWVNRLKHFKKLVQAQPHL</sequence>
<evidence type="ECO:0000250" key="1"/>
<evidence type="ECO:0000269" key="2">
    <source>
    </source>
</evidence>
<evidence type="ECO:0000305" key="3"/>
<evidence type="ECO:0000305" key="4">
    <source>
    </source>
</evidence>
<comment type="function">
    <text evidence="2">Processive glycosyltransferase involved in the biosynthesis of both the non-bilayer-prone beta-monoglycosyldiacylglycerol and the bilayer-forming membrane lipid glucosyl-galactosyldiacylglycerol and digalactosyl-diacylglycerol. These components contribute to regulate the properties and stability of the membrane. Catalyzes sequentially the transfers of glucosyl or galactosyl residues from UDP-Glc or UDP-Gal to diacylglycerol (DAG) acceptor to form the corresponding beta-glycosyl-DAG (3-O-(beta-D-glycopyranosyl)-1,2-diacyl-sn-glycerol). Then, only beta-galactosyl-DAG (3-O-(beta-D-galactopyranosyl)-1,2-diacyl-sn-glycerol) can act as acceptor to give the beta-glycosyl-beta-galactosyl-DAG product (3-O-(beta-D-glycopyranosyl-(1-&gt;6)-D-galactopyranosyl)-1,2-diacyl-sn-glycerol). It can also use alpha-Gal-beta-Gal-DAG, ceramide (Cer) and beta-Gal-Cer as sugar acceptors. The enzyme is supposed to be mainly a galactosyltransferase, with higher glycosyltransferase activity for the addition of the second glycosyl on beta-Gal-DAG as acceptor. The main glycolipid produced in vivo is beta-Glc-beta-Gal-DAG with a beta-1,6 linkage.</text>
</comment>
<comment type="catalytic activity">
    <reaction evidence="2">
        <text>a 1,2-diacyl-sn-glycerol + UDP-alpha-D-glucose = a 1,2-diacyl-3-O-(beta-D-glucopyranosyl)-sn-glycerol + UDP + H(+)</text>
        <dbReference type="Rhea" id="RHEA:17285"/>
        <dbReference type="ChEBI" id="CHEBI:15378"/>
        <dbReference type="ChEBI" id="CHEBI:17815"/>
        <dbReference type="ChEBI" id="CHEBI:58223"/>
        <dbReference type="ChEBI" id="CHEBI:58885"/>
        <dbReference type="ChEBI" id="CHEBI:75799"/>
    </reaction>
</comment>
<comment type="catalytic activity">
    <reaction evidence="2">
        <text>a 1,2-diacyl-sn-glycerol + UDP-alpha-D-galactose = a 1,2-diacyl-3-O-(beta-D-galactosyl)-sn-glycerol + UDP + H(+)</text>
        <dbReference type="Rhea" id="RHEA:14945"/>
        <dbReference type="ChEBI" id="CHEBI:15378"/>
        <dbReference type="ChEBI" id="CHEBI:17615"/>
        <dbReference type="ChEBI" id="CHEBI:17815"/>
        <dbReference type="ChEBI" id="CHEBI:58223"/>
        <dbReference type="ChEBI" id="CHEBI:66914"/>
    </reaction>
</comment>
<comment type="catalytic activity">
    <reaction evidence="2">
        <text>a 1,2-diacyl-3-O-(beta-D-galactosyl)-sn-glycerol + UDP-alpha-D-glucose = a 1,2-diacyl-3-O-[beta-D-glucopyranosyl-(1-&gt;6)-beta-D-galactopyranosyl]-sn-glycerol + UDP + H(+)</text>
        <dbReference type="Rhea" id="RHEA:53752"/>
        <dbReference type="ChEBI" id="CHEBI:15378"/>
        <dbReference type="ChEBI" id="CHEBI:17615"/>
        <dbReference type="ChEBI" id="CHEBI:58223"/>
        <dbReference type="ChEBI" id="CHEBI:58885"/>
        <dbReference type="ChEBI" id="CHEBI:137667"/>
    </reaction>
</comment>
<comment type="catalytic activity">
    <reaction evidence="2">
        <text>a 1,2-diacyl-3-O-(beta-D-galactosyl)-sn-glycerol + UDP-alpha-D-galactose = a 1,2-diacyl-3-O-[beta-D-galactosyl-(1-&gt;6)-beta-D-galactosyl]-sn-glycerol + UDP + H(+)</text>
        <dbReference type="Rhea" id="RHEA:53748"/>
        <dbReference type="ChEBI" id="CHEBI:15378"/>
        <dbReference type="ChEBI" id="CHEBI:17615"/>
        <dbReference type="ChEBI" id="CHEBI:58223"/>
        <dbReference type="ChEBI" id="CHEBI:66914"/>
        <dbReference type="ChEBI" id="CHEBI:87082"/>
    </reaction>
</comment>
<comment type="cofactor">
    <cofactor evidence="1">
        <name>Mg(2+)</name>
        <dbReference type="ChEBI" id="CHEBI:18420"/>
    </cofactor>
</comment>
<comment type="activity regulation">
    <text evidence="2">Activated by the negatively charged lipid phosphatidylglycerol (PG).</text>
</comment>
<comment type="subcellular location">
    <subcellularLocation>
        <location evidence="1">Cell membrane</location>
    </subcellularLocation>
</comment>
<comment type="miscellaneous">
    <text evidence="4">The local lipid environment around the enzyme affects both the extent of head group elongation and total amounts of glycolipids produced.</text>
</comment>
<comment type="miscellaneous">
    <text evidence="4">Glycolipids such as beta-Gal-DAG, alpha-Gal-beta-Gal-DAG, beta-Glc-beta-Gal-DAG and beta-Gal-Cer are highly immunogenic and are reactive towards IgM antibodies. Glycolipids with a terminal beta-Gal are more reactive than the ones with a beta-Glc residue (PubMed:17697098).</text>
</comment>
<comment type="similarity">
    <text evidence="3">Belongs to the glycosyltransferase 2 family.</text>
</comment>
<gene>
    <name type="ordered locus">MPN_483</name>
    <name type="ORF">MP359</name>
    <name type="ORF">P01_orf341</name>
</gene>
<reference key="1">
    <citation type="journal article" date="1996" name="Nucleic Acids Res.">
        <title>Complete sequence analysis of the genome of the bacterium Mycoplasma pneumoniae.</title>
        <authorList>
            <person name="Himmelreich R."/>
            <person name="Hilbert H."/>
            <person name="Plagens H."/>
            <person name="Pirkl E."/>
            <person name="Li B.-C."/>
            <person name="Herrmann R."/>
        </authorList>
    </citation>
    <scope>NUCLEOTIDE SEQUENCE [LARGE SCALE GENOMIC DNA]</scope>
    <source>
        <strain>ATCC 29342 / M129 / Subtype 1</strain>
    </source>
</reference>
<reference key="2">
    <citation type="journal article" date="2007" name="Mol. Microbiol.">
        <title>A processive lipid glycosyltransferase in the small human pathogen Mycoplasma pneumoniae: involvement in host immune response.</title>
        <authorList>
            <person name="Klement M.L."/>
            <person name="Ojemyr L."/>
            <person name="Tagscherer K.E."/>
            <person name="Widmalm G."/>
            <person name="Wieslander A."/>
        </authorList>
    </citation>
    <scope>FUNCTION</scope>
    <scope>CATALYTIC ACTIVITY</scope>
    <scope>ACTIVITY REGULATION</scope>
    <scope>SUBSTRATE SPECIFICITY</scope>
    <source>
        <strain>ATCC 29342 / M129 / Subtype 1</strain>
    </source>
</reference>
<keyword id="KW-0119">Carbohydrate metabolism</keyword>
<keyword id="KW-1003">Cell membrane</keyword>
<keyword id="KW-0319">Glycerol metabolism</keyword>
<keyword id="KW-0328">Glycosyltransferase</keyword>
<keyword id="KW-0444">Lipid biosynthesis</keyword>
<keyword id="KW-0443">Lipid metabolism</keyword>
<keyword id="KW-0460">Magnesium</keyword>
<keyword id="KW-0472">Membrane</keyword>
<keyword id="KW-1185">Reference proteome</keyword>
<keyword id="KW-0808">Transferase</keyword>
<dbReference type="EC" id="2.4.1.-"/>
<dbReference type="EMBL" id="U00089">
    <property type="protein sequence ID" value="AAB96007.1"/>
    <property type="molecule type" value="Genomic_DNA"/>
</dbReference>
<dbReference type="PIR" id="S73685">
    <property type="entry name" value="S73685"/>
</dbReference>
<dbReference type="RefSeq" id="NP_110171.1">
    <property type="nucleotide sequence ID" value="NC_000912.1"/>
</dbReference>
<dbReference type="SMR" id="P75302"/>
<dbReference type="IntAct" id="P75302">
    <property type="interactions" value="3"/>
</dbReference>
<dbReference type="STRING" id="272634.MPN_483"/>
<dbReference type="CAZy" id="GT2">
    <property type="family name" value="Glycosyltransferase Family 2"/>
</dbReference>
<dbReference type="EnsemblBacteria" id="AAB96007">
    <property type="protein sequence ID" value="AAB96007"/>
    <property type="gene ID" value="MPN_483"/>
</dbReference>
<dbReference type="KEGG" id="mpn:MPN_483"/>
<dbReference type="PATRIC" id="fig|272634.6.peg.522"/>
<dbReference type="HOGENOM" id="CLU_813338_0_0_14"/>
<dbReference type="OrthoDB" id="9785185at2"/>
<dbReference type="BioCyc" id="MPNE272634:G1GJ3-791-MONOMER"/>
<dbReference type="Proteomes" id="UP000000808">
    <property type="component" value="Chromosome"/>
</dbReference>
<dbReference type="GO" id="GO:0005886">
    <property type="term" value="C:plasma membrane"/>
    <property type="evidence" value="ECO:0007669"/>
    <property type="project" value="UniProtKB-SubCell"/>
</dbReference>
<dbReference type="GO" id="GO:0046509">
    <property type="term" value="F:1,2-diacylglycerol 3-beta-galactosyltransferase activity"/>
    <property type="evidence" value="ECO:0007669"/>
    <property type="project" value="RHEA"/>
</dbReference>
<dbReference type="GO" id="GO:0006071">
    <property type="term" value="P:glycerol metabolic process"/>
    <property type="evidence" value="ECO:0007669"/>
    <property type="project" value="UniProtKB-KW"/>
</dbReference>
<dbReference type="GO" id="GO:0046467">
    <property type="term" value="P:membrane lipid biosynthetic process"/>
    <property type="evidence" value="ECO:0000314"/>
    <property type="project" value="UniProtKB"/>
</dbReference>
<dbReference type="CDD" id="cd00761">
    <property type="entry name" value="Glyco_tranf_GTA_type"/>
    <property type="match status" value="1"/>
</dbReference>
<dbReference type="FunFam" id="3.90.550.10:FF:000323">
    <property type="entry name" value="Processive diacylglycerol beta-glycosyltransferase"/>
    <property type="match status" value="1"/>
</dbReference>
<dbReference type="Gene3D" id="3.90.550.10">
    <property type="entry name" value="Spore Coat Polysaccharide Biosynthesis Protein SpsA, Chain A"/>
    <property type="match status" value="1"/>
</dbReference>
<dbReference type="InterPro" id="IPR001173">
    <property type="entry name" value="Glyco_trans_2-like"/>
</dbReference>
<dbReference type="InterPro" id="IPR029044">
    <property type="entry name" value="Nucleotide-diphossugar_trans"/>
</dbReference>
<dbReference type="PANTHER" id="PTHR22916">
    <property type="entry name" value="GLYCOSYLTRANSFERASE"/>
    <property type="match status" value="1"/>
</dbReference>
<dbReference type="PANTHER" id="PTHR22916:SF51">
    <property type="entry name" value="GLYCOSYLTRANSFERASE EPSH-RELATED"/>
    <property type="match status" value="1"/>
</dbReference>
<dbReference type="Pfam" id="PF00535">
    <property type="entry name" value="Glycos_transf_2"/>
    <property type="match status" value="1"/>
</dbReference>
<dbReference type="SUPFAM" id="SSF53448">
    <property type="entry name" value="Nucleotide-diphospho-sugar transferases"/>
    <property type="match status" value="1"/>
</dbReference>
<protein>
    <recommendedName>
        <fullName>Processive diacylglycerol beta-glycosyltransferase</fullName>
        <ecNumber>2.4.1.-</ecNumber>
    </recommendedName>
    <alternativeName>
        <fullName>Beta-monoglycosyldiacylglycerol synthase</fullName>
        <shortName>Beta-MGS</shortName>
        <shortName>MGlyDAG synthase</shortName>
    </alternativeName>
    <alternativeName>
        <fullName>Diglycosyldiacylglycerol synthase</fullName>
        <shortName>Beta-DGS</shortName>
        <shortName>DGlyDAG synthase</shortName>
    </alternativeName>
    <alternativeName>
        <fullName>Glycosyl-beta-1,6-galactosyldiacylglycerol synthase</fullName>
    </alternativeName>
    <alternativeName>
        <fullName>UDP-galactose:1,2-diacylglycerol 3-beta-D-galactosyltransferase</fullName>
    </alternativeName>
    <alternativeName>
        <fullName>UDP-glucose:1,2-diacylglycerol 3-beta-D-glucosyltransferase</fullName>
    </alternativeName>
</protein>
<feature type="chain" id="PRO_0000059246" description="Processive diacylglycerol beta-glycosyltransferase">
    <location>
        <begin position="1"/>
        <end position="341"/>
    </location>
</feature>
<proteinExistence type="evidence at protein level"/>
<accession>P75302</accession>